<evidence type="ECO:0000250" key="1"/>
<evidence type="ECO:0000255" key="2"/>
<evidence type="ECO:0000305" key="3"/>
<name>GLIP5_ARATH</name>
<dbReference type="EC" id="3.1.1.-"/>
<dbReference type="EMBL" id="AC009324">
    <property type="protein sequence ID" value="AAF02864.1"/>
    <property type="status" value="ALT_SEQ"/>
    <property type="molecule type" value="Genomic_DNA"/>
</dbReference>
<dbReference type="EMBL" id="CP002684">
    <property type="protein sequence ID" value="AEE33025.1"/>
    <property type="molecule type" value="Genomic_DNA"/>
</dbReference>
<dbReference type="PIR" id="E96579">
    <property type="entry name" value="E96579"/>
</dbReference>
<dbReference type="RefSeq" id="NP_175795.2">
    <property type="nucleotide sequence ID" value="NM_104270.3"/>
</dbReference>
<dbReference type="SMR" id="Q9SSA7"/>
<dbReference type="FunCoup" id="Q9SSA7">
    <property type="interactions" value="104"/>
</dbReference>
<dbReference type="STRING" id="3702.Q9SSA7"/>
<dbReference type="GlyCosmos" id="Q9SSA7">
    <property type="glycosylation" value="5 sites, No reported glycans"/>
</dbReference>
<dbReference type="GlyGen" id="Q9SSA7">
    <property type="glycosylation" value="5 sites"/>
</dbReference>
<dbReference type="PaxDb" id="3702-AT1G53920.1"/>
<dbReference type="ProteomicsDB" id="248621"/>
<dbReference type="EnsemblPlants" id="AT1G53920.1">
    <property type="protein sequence ID" value="AT1G53920.1"/>
    <property type="gene ID" value="AT1G53920"/>
</dbReference>
<dbReference type="GeneID" id="841830"/>
<dbReference type="Gramene" id="AT1G53920.1">
    <property type="protein sequence ID" value="AT1G53920.1"/>
    <property type="gene ID" value="AT1G53920"/>
</dbReference>
<dbReference type="KEGG" id="ath:AT1G53920"/>
<dbReference type="Araport" id="AT1G53920"/>
<dbReference type="TAIR" id="AT1G53920">
    <property type="gene designation" value="GLIP5"/>
</dbReference>
<dbReference type="eggNOG" id="ENOG502QQWV">
    <property type="taxonomic scope" value="Eukaryota"/>
</dbReference>
<dbReference type="HOGENOM" id="CLU_015101_0_2_1"/>
<dbReference type="InParanoid" id="Q9SSA7"/>
<dbReference type="OMA" id="DYMSPFL"/>
<dbReference type="PhylomeDB" id="Q9SSA7"/>
<dbReference type="BioCyc" id="ARA:AT1G53920-MONOMER"/>
<dbReference type="PRO" id="PR:Q9SSA7"/>
<dbReference type="Proteomes" id="UP000006548">
    <property type="component" value="Chromosome 1"/>
</dbReference>
<dbReference type="ExpressionAtlas" id="Q9SSA7">
    <property type="expression patterns" value="baseline and differential"/>
</dbReference>
<dbReference type="GO" id="GO:0005576">
    <property type="term" value="C:extracellular region"/>
    <property type="evidence" value="ECO:0007669"/>
    <property type="project" value="UniProtKB-SubCell"/>
</dbReference>
<dbReference type="GO" id="GO:0016298">
    <property type="term" value="F:lipase activity"/>
    <property type="evidence" value="ECO:0000250"/>
    <property type="project" value="TAIR"/>
</dbReference>
<dbReference type="GO" id="GO:0016042">
    <property type="term" value="P:lipid catabolic process"/>
    <property type="evidence" value="ECO:0007669"/>
    <property type="project" value="UniProtKB-KW"/>
</dbReference>
<dbReference type="CDD" id="cd01837">
    <property type="entry name" value="SGNH_plant_lipase_like"/>
    <property type="match status" value="1"/>
</dbReference>
<dbReference type="Gene3D" id="3.40.50.1110">
    <property type="entry name" value="SGNH hydrolase"/>
    <property type="match status" value="1"/>
</dbReference>
<dbReference type="InterPro" id="IPR001087">
    <property type="entry name" value="GDSL"/>
</dbReference>
<dbReference type="InterPro" id="IPR044552">
    <property type="entry name" value="GLIP1-5/GLL25"/>
</dbReference>
<dbReference type="InterPro" id="IPR036514">
    <property type="entry name" value="SGNH_hydro_sf"/>
</dbReference>
<dbReference type="InterPro" id="IPR035669">
    <property type="entry name" value="SGNH_plant_lipase-like"/>
</dbReference>
<dbReference type="PANTHER" id="PTHR45966:SF4">
    <property type="entry name" value="GDSL ESTERASE_LIPASE 5"/>
    <property type="match status" value="1"/>
</dbReference>
<dbReference type="PANTHER" id="PTHR45966">
    <property type="entry name" value="GDSL-LIKE LIPASE/ACYLHYDROLASE"/>
    <property type="match status" value="1"/>
</dbReference>
<dbReference type="Pfam" id="PF00657">
    <property type="entry name" value="Lipase_GDSL"/>
    <property type="match status" value="1"/>
</dbReference>
<dbReference type="SUPFAM" id="SSF52266">
    <property type="entry name" value="SGNH hydrolase"/>
    <property type="match status" value="1"/>
</dbReference>
<gene>
    <name type="primary">GLIP5</name>
    <name type="ordered locus">At1g53920</name>
    <name type="ORF">T18A20.15</name>
</gene>
<accession>Q9SSA7</accession>
<feature type="signal peptide" evidence="2">
    <location>
        <begin position="1"/>
        <end position="35"/>
    </location>
</feature>
<feature type="chain" id="PRO_0000367338" description="GDSL esterase/lipase 5">
    <location>
        <begin position="36"/>
        <end position="385"/>
    </location>
</feature>
<feature type="active site" description="Nucleophile" evidence="1">
    <location>
        <position position="55"/>
    </location>
</feature>
<feature type="active site" evidence="1">
    <location>
        <position position="345"/>
    </location>
</feature>
<feature type="active site" evidence="1">
    <location>
        <position position="348"/>
    </location>
</feature>
<feature type="glycosylation site" description="N-linked (GlcNAc...) asparagine" evidence="2">
    <location>
        <position position="45"/>
    </location>
</feature>
<feature type="glycosylation site" description="N-linked (GlcNAc...) asparagine" evidence="2">
    <location>
        <position position="66"/>
    </location>
</feature>
<feature type="glycosylation site" description="N-linked (GlcNAc...) asparagine" evidence="2">
    <location>
        <position position="194"/>
    </location>
</feature>
<feature type="glycosylation site" description="N-linked (GlcNAc...) asparagine" evidence="2">
    <location>
        <position position="211"/>
    </location>
</feature>
<feature type="glycosylation site" description="N-linked (GlcNAc...) asparagine" evidence="2">
    <location>
        <position position="289"/>
    </location>
</feature>
<proteinExistence type="evidence at transcript level"/>
<comment type="subcellular location">
    <subcellularLocation>
        <location evidence="1">Secreted</location>
    </subcellularLocation>
</comment>
<comment type="similarity">
    <text evidence="3">Belongs to the 'GDSL' lipolytic enzyme family.</text>
</comment>
<comment type="sequence caution" evidence="3">
    <conflict type="erroneous gene model prediction">
        <sequence resource="EMBL-CDS" id="AAF02864"/>
    </conflict>
</comment>
<reference key="1">
    <citation type="journal article" date="2000" name="Nature">
        <title>Sequence and analysis of chromosome 1 of the plant Arabidopsis thaliana.</title>
        <authorList>
            <person name="Theologis A."/>
            <person name="Ecker J.R."/>
            <person name="Palm C.J."/>
            <person name="Federspiel N.A."/>
            <person name="Kaul S."/>
            <person name="White O."/>
            <person name="Alonso J."/>
            <person name="Altafi H."/>
            <person name="Araujo R."/>
            <person name="Bowman C.L."/>
            <person name="Brooks S.Y."/>
            <person name="Buehler E."/>
            <person name="Chan A."/>
            <person name="Chao Q."/>
            <person name="Chen H."/>
            <person name="Cheuk R.F."/>
            <person name="Chin C.W."/>
            <person name="Chung M.K."/>
            <person name="Conn L."/>
            <person name="Conway A.B."/>
            <person name="Conway A.R."/>
            <person name="Creasy T.H."/>
            <person name="Dewar K."/>
            <person name="Dunn P."/>
            <person name="Etgu P."/>
            <person name="Feldblyum T.V."/>
            <person name="Feng J.-D."/>
            <person name="Fong B."/>
            <person name="Fujii C.Y."/>
            <person name="Gill J.E."/>
            <person name="Goldsmith A.D."/>
            <person name="Haas B."/>
            <person name="Hansen N.F."/>
            <person name="Hughes B."/>
            <person name="Huizar L."/>
            <person name="Hunter J.L."/>
            <person name="Jenkins J."/>
            <person name="Johnson-Hopson C."/>
            <person name="Khan S."/>
            <person name="Khaykin E."/>
            <person name="Kim C.J."/>
            <person name="Koo H.L."/>
            <person name="Kremenetskaia I."/>
            <person name="Kurtz D.B."/>
            <person name="Kwan A."/>
            <person name="Lam B."/>
            <person name="Langin-Hooper S."/>
            <person name="Lee A."/>
            <person name="Lee J.M."/>
            <person name="Lenz C.A."/>
            <person name="Li J.H."/>
            <person name="Li Y.-P."/>
            <person name="Lin X."/>
            <person name="Liu S.X."/>
            <person name="Liu Z.A."/>
            <person name="Luros J.S."/>
            <person name="Maiti R."/>
            <person name="Marziali A."/>
            <person name="Militscher J."/>
            <person name="Miranda M."/>
            <person name="Nguyen M."/>
            <person name="Nierman W.C."/>
            <person name="Osborne B.I."/>
            <person name="Pai G."/>
            <person name="Peterson J."/>
            <person name="Pham P.K."/>
            <person name="Rizzo M."/>
            <person name="Rooney T."/>
            <person name="Rowley D."/>
            <person name="Sakano H."/>
            <person name="Salzberg S.L."/>
            <person name="Schwartz J.R."/>
            <person name="Shinn P."/>
            <person name="Southwick A.M."/>
            <person name="Sun H."/>
            <person name="Tallon L.J."/>
            <person name="Tambunga G."/>
            <person name="Toriumi M.J."/>
            <person name="Town C.D."/>
            <person name="Utterback T."/>
            <person name="Van Aken S."/>
            <person name="Vaysberg M."/>
            <person name="Vysotskaia V.S."/>
            <person name="Walker M."/>
            <person name="Wu D."/>
            <person name="Yu G."/>
            <person name="Fraser C.M."/>
            <person name="Venter J.C."/>
            <person name="Davis R.W."/>
        </authorList>
    </citation>
    <scope>NUCLEOTIDE SEQUENCE [LARGE SCALE GENOMIC DNA]</scope>
    <source>
        <strain>cv. Columbia</strain>
    </source>
</reference>
<reference key="2">
    <citation type="journal article" date="2017" name="Plant J.">
        <title>Araport11: a complete reannotation of the Arabidopsis thaliana reference genome.</title>
        <authorList>
            <person name="Cheng C.Y."/>
            <person name="Krishnakumar V."/>
            <person name="Chan A.P."/>
            <person name="Thibaud-Nissen F."/>
            <person name="Schobel S."/>
            <person name="Town C.D."/>
        </authorList>
    </citation>
    <scope>GENOME REANNOTATION</scope>
    <source>
        <strain>cv. Columbia</strain>
    </source>
</reference>
<reference key="3">
    <citation type="journal article" date="2004" name="Prog. Lipid Res.">
        <title>GDSL family of serine esterases/lipases.</title>
        <authorList>
            <person name="Akoh C.C."/>
            <person name="Lee G.-C."/>
            <person name="Liaw Y.-C."/>
            <person name="Huang T.-H."/>
            <person name="Shaw J.-F."/>
        </authorList>
    </citation>
    <scope>REVIEW</scope>
</reference>
<reference key="4">
    <citation type="journal article" date="2005" name="Plant Cell">
        <title>Secretome analysis reveals an Arabidopsis lipase involved in defense against Alternaria brassicicola.</title>
        <authorList>
            <person name="Oh I.S."/>
            <person name="Park A.R."/>
            <person name="Bae M.S."/>
            <person name="Kwon S.J."/>
            <person name="Kim Y.S."/>
            <person name="Lee J.E."/>
            <person name="Kang N.Y."/>
            <person name="Lee S."/>
            <person name="Cheong H."/>
            <person name="Park O.K."/>
        </authorList>
    </citation>
    <scope>GENE FAMILY</scope>
</reference>
<reference key="5">
    <citation type="journal article" date="2008" name="Pak. J. Biol. Sci.">
        <title>Sequence analysis of GDSL lipase gene family in Arabidopsis thaliana.</title>
        <authorList>
            <person name="Ling H."/>
        </authorList>
    </citation>
    <scope>GENE FAMILY</scope>
</reference>
<sequence>MRESTLMEKVTRRTISSFIFFIVSSTILFLAGKSSAKISHNGDNNVTALFLFGDSFLDAGNNNYINTTTLDQANFPPYGQTFFGLPTGRFSDGRLISDFIAEYANLPLIPPFLEPGNSQKKLYGVNFASAGAGALVETFQGSVINLRTQLDHYKKVERLWRTNFGKEESKKRISRAVYLISIGSNDYSSIFLTNQSLPISMSQHVDIVIGNLTTFIHEIYKIGGRKFGFLNVPDLGCFPALRILQPKNDDSCLRDASRLASMHNRALTNLLFQMQRQVKGFKFSLFDMNKSLRLRMQHPSKFGFKEGEEACCGTGKWRGVFSCGGKRIVKEYQLCENPKDYIFWDSLHLTQNTYNQFANLIWNGGHMSDSLVVGPYNINNLFQIP</sequence>
<protein>
    <recommendedName>
        <fullName>GDSL esterase/lipase 5</fullName>
        <ecNumber>3.1.1.-</ecNumber>
    </recommendedName>
    <alternativeName>
        <fullName>Extracellular lipase 5</fullName>
    </alternativeName>
</protein>
<keyword id="KW-0325">Glycoprotein</keyword>
<keyword id="KW-0378">Hydrolase</keyword>
<keyword id="KW-0442">Lipid degradation</keyword>
<keyword id="KW-0443">Lipid metabolism</keyword>
<keyword id="KW-1185">Reference proteome</keyword>
<keyword id="KW-0964">Secreted</keyword>
<keyword id="KW-0732">Signal</keyword>
<organism>
    <name type="scientific">Arabidopsis thaliana</name>
    <name type="common">Mouse-ear cress</name>
    <dbReference type="NCBI Taxonomy" id="3702"/>
    <lineage>
        <taxon>Eukaryota</taxon>
        <taxon>Viridiplantae</taxon>
        <taxon>Streptophyta</taxon>
        <taxon>Embryophyta</taxon>
        <taxon>Tracheophyta</taxon>
        <taxon>Spermatophyta</taxon>
        <taxon>Magnoliopsida</taxon>
        <taxon>eudicotyledons</taxon>
        <taxon>Gunneridae</taxon>
        <taxon>Pentapetalae</taxon>
        <taxon>rosids</taxon>
        <taxon>malvids</taxon>
        <taxon>Brassicales</taxon>
        <taxon>Brassicaceae</taxon>
        <taxon>Camelineae</taxon>
        <taxon>Arabidopsis</taxon>
    </lineage>
</organism>